<keyword id="KW-0002">3D-structure</keyword>
<keyword id="KW-0407">Ion channel</keyword>
<keyword id="KW-0406">Ion transport</keyword>
<keyword id="KW-0472">Membrane</keyword>
<keyword id="KW-0630">Potassium</keyword>
<keyword id="KW-0633">Potassium transport</keyword>
<keyword id="KW-1267">Proteomics identification</keyword>
<keyword id="KW-1185">Reference proteome</keyword>
<keyword id="KW-0812">Transmembrane</keyword>
<keyword id="KW-1133">Transmembrane helix</keyword>
<keyword id="KW-0813">Transport</keyword>
<keyword id="KW-0851">Voltage-gated channel</keyword>
<proteinExistence type="evidence at protein level"/>
<feature type="chain" id="PRO_0000154950" description="G protein-activated inward rectifier potassium channel 3">
    <location>
        <begin position="1"/>
        <end position="393"/>
    </location>
</feature>
<feature type="topological domain" description="Cytoplasmic" evidence="1">
    <location>
        <begin position="1"/>
        <end position="57"/>
    </location>
</feature>
<feature type="transmembrane region" description="Helical; Name=M1" evidence="1">
    <location>
        <begin position="58"/>
        <end position="82"/>
    </location>
</feature>
<feature type="topological domain" description="Extracellular" evidence="1">
    <location>
        <begin position="83"/>
        <end position="106"/>
    </location>
</feature>
<feature type="intramembrane region" description="Helical; Pore-forming; Name=H5" evidence="1">
    <location>
        <begin position="107"/>
        <end position="118"/>
    </location>
</feature>
<feature type="intramembrane region" description="Pore-forming" evidence="1">
    <location>
        <begin position="119"/>
        <end position="125"/>
    </location>
</feature>
<feature type="topological domain" description="Extracellular" evidence="1">
    <location>
        <begin position="126"/>
        <end position="134"/>
    </location>
</feature>
<feature type="transmembrane region" description="Helical; Name=M2" evidence="1">
    <location>
        <begin position="135"/>
        <end position="156"/>
    </location>
</feature>
<feature type="topological domain" description="Cytoplasmic" evidence="1">
    <location>
        <begin position="157"/>
        <end position="393"/>
    </location>
</feature>
<feature type="region of interest" description="Disordered" evidence="6">
    <location>
        <begin position="1"/>
        <end position="23"/>
    </location>
</feature>
<feature type="region of interest" description="Disordered" evidence="6">
    <location>
        <begin position="360"/>
        <end position="393"/>
    </location>
</feature>
<feature type="short sequence motif" description="Selectivity filter" evidence="1">
    <location>
        <begin position="120"/>
        <end position="125"/>
    </location>
</feature>
<feature type="short sequence motif" description="PDZ-binding">
    <location>
        <begin position="390"/>
        <end position="393"/>
    </location>
</feature>
<feature type="compositionally biased region" description="Pro residues" evidence="6">
    <location>
        <begin position="384"/>
        <end position="393"/>
    </location>
</feature>
<feature type="site" description="Role in the control of polyamine-mediated channel gating and in the blocking by intracellular magnesium" evidence="1">
    <location>
        <position position="150"/>
    </location>
</feature>
<feature type="sequence variant" id="VAR_023568" description="In dbSNP:rs3001040." evidence="7 8">
    <original>A</original>
    <variation>V</variation>
    <location>
        <position position="366"/>
    </location>
</feature>
<feature type="strand" evidence="10">
    <location>
        <begin position="389"/>
        <end position="392"/>
    </location>
</feature>
<evidence type="ECO:0000250" key="1"/>
<evidence type="ECO:0000250" key="2">
    <source>
        <dbReference type="UniProtKB" id="P48543"/>
    </source>
</evidence>
<evidence type="ECO:0000250" key="3">
    <source>
        <dbReference type="UniProtKB" id="P63251"/>
    </source>
</evidence>
<evidence type="ECO:0000250" key="4">
    <source>
        <dbReference type="UniProtKB" id="Q63511"/>
    </source>
</evidence>
<evidence type="ECO:0000255" key="5"/>
<evidence type="ECO:0000256" key="6">
    <source>
        <dbReference type="SAM" id="MobiDB-lite"/>
    </source>
</evidence>
<evidence type="ECO:0000269" key="7">
    <source>
    </source>
</evidence>
<evidence type="ECO:0000269" key="8">
    <source>
    </source>
</evidence>
<evidence type="ECO:0000305" key="9"/>
<evidence type="ECO:0007829" key="10">
    <source>
        <dbReference type="PDB" id="6X23"/>
    </source>
</evidence>
<gene>
    <name type="primary">KCNJ9</name>
    <name type="synonym">GIRK3</name>
</gene>
<organism>
    <name type="scientific">Homo sapiens</name>
    <name type="common">Human</name>
    <dbReference type="NCBI Taxonomy" id="9606"/>
    <lineage>
        <taxon>Eukaryota</taxon>
        <taxon>Metazoa</taxon>
        <taxon>Chordata</taxon>
        <taxon>Craniata</taxon>
        <taxon>Vertebrata</taxon>
        <taxon>Euteleostomi</taxon>
        <taxon>Mammalia</taxon>
        <taxon>Eutheria</taxon>
        <taxon>Euarchontoglires</taxon>
        <taxon>Primates</taxon>
        <taxon>Haplorrhini</taxon>
        <taxon>Catarrhini</taxon>
        <taxon>Hominidae</taxon>
        <taxon>Homo</taxon>
    </lineage>
</organism>
<sequence>MAQENAAFSPGQEEPPRRRGRQRYVEKDGRCNVQQGNVRETYRYLTDLFTTLVDLQWRLSLLFFVLAYALTWLFFGAIWWLIAYGRGDLEHLEDTAWTPCVNNLNGFVAAFLFSIETETTIGYGHRVITDQCPEGIVLLLLQAILGSMVNAFMVGCMFVKISQPNKRAATLVFSSHAVVSLRDGRLCLMFRVGDLRSSHIVEASIRAKLIRSRQTLEGEFIPLHQTDLSVGFDTGDDRLFLVSPLVISHEIDAASPFWEASRRALERDDFEIVVILEGMVEATGMTCQARSSYLVDEVLWGHRFTSVLTLEDGFYEVDYASFHETFEVPTPSCSARELAEAAARLDAHLYWSIPSRLDEKVEEEGAGEGAGGEAGADKEQNGCLPPPESESKV</sequence>
<comment type="function">
    <text evidence="4 7">Inward rectifier potassium channels are characterized by a greater tendency to allow potassium to flow into the cell rather than out of it. Their voltage dependence is regulated by the concentration of extracellular potassium; as external potassium is raised, the voltage range of the channel opening shifts to more positive voltages. The inward rectification is mainly due to the blockage of outward current by internal magnesium, This receptor is controlled by G proteins. Unable to produce channel activity when expressed alone (PubMed:10659995). Forms a functional channel in association with KCNJ3/GIRK1 (By similarity).</text>
</comment>
<comment type="catalytic activity">
    <reaction evidence="3">
        <text>K(+)(in) = K(+)(out)</text>
        <dbReference type="Rhea" id="RHEA:29463"/>
        <dbReference type="ChEBI" id="CHEBI:29103"/>
    </reaction>
</comment>
<comment type="subunit">
    <text evidence="2 4">Associates with KCNJ3/GIRK1 to form a G-protein-activated heteromultimer pore-forming unit. Interacts (via PDZ-binding motif) with SNX27 (via PDZ domain); the interaction is required when endocytosed to prevent degradation in lysosomes and promote recycling to the plasma membrane.</text>
</comment>
<comment type="interaction">
    <interactant intactId="EBI-12822837">
        <id>Q92806</id>
    </interactant>
    <interactant intactId="EBI-11994282">
        <id>Q5SNT2-2</id>
        <label>TMEM201</label>
    </interactant>
    <organismsDiffer>false</organismsDiffer>
    <experiments>3</experiments>
</comment>
<comment type="subcellular location">
    <subcellularLocation>
        <location evidence="5">Membrane</location>
        <topology evidence="5">Multi-pass membrane protein</topology>
    </subcellularLocation>
</comment>
<comment type="domain">
    <text evidence="4">The PDZ-binding motif specifically binds the PDZ domain of SNX27: the specificity for SNX27 is provided by the 2 residues located upstream (Glu-388 and Ser-389) of the PDZ-binding motif.</text>
</comment>
<comment type="similarity">
    <text evidence="9">Belongs to the inward rectifier-type potassium channel (TC 1.A.2.1) family. KCNJ9 subfamily.</text>
</comment>
<reference key="1">
    <citation type="journal article" date="1999" name="Cell. Signal.">
        <title>Co-expression of human Kir3 subunits can yield channels with different functional properties.</title>
        <authorList>
            <person name="Schoots O."/>
            <person name="Wilson J.M."/>
            <person name="Ethier N."/>
            <person name="Bigras E."/>
            <person name="Hebert T.E."/>
            <person name="Van Tol H.H.M."/>
        </authorList>
    </citation>
    <scope>NUCLEOTIDE SEQUENCE [MRNA]</scope>
    <scope>VARIANT VAL-366</scope>
    <scope>FUNCTION</scope>
</reference>
<reference key="2">
    <citation type="journal article" date="2000" name="Biochem. Biophys. Res. Commun.">
        <title>Genomic structure and expression of human KCNJ9 (Kir3.3/GIRK3).</title>
        <authorList>
            <person name="Vaughn J."/>
            <person name="Wolford J.K."/>
            <person name="Prochazka M."/>
            <person name="Permana P.A."/>
        </authorList>
    </citation>
    <scope>NUCLEOTIDE SEQUENCE [GENOMIC DNA]</scope>
    <scope>VARIANT VAL-366</scope>
</reference>
<reference key="3">
    <citation type="journal article" date="2006" name="Nature">
        <title>The DNA sequence and biological annotation of human chromosome 1.</title>
        <authorList>
            <person name="Gregory S.G."/>
            <person name="Barlow K.F."/>
            <person name="McLay K.E."/>
            <person name="Kaul R."/>
            <person name="Swarbreck D."/>
            <person name="Dunham A."/>
            <person name="Scott C.E."/>
            <person name="Howe K.L."/>
            <person name="Woodfine K."/>
            <person name="Spencer C.C.A."/>
            <person name="Jones M.C."/>
            <person name="Gillson C."/>
            <person name="Searle S."/>
            <person name="Zhou Y."/>
            <person name="Kokocinski F."/>
            <person name="McDonald L."/>
            <person name="Evans R."/>
            <person name="Phillips K."/>
            <person name="Atkinson A."/>
            <person name="Cooper R."/>
            <person name="Jones C."/>
            <person name="Hall R.E."/>
            <person name="Andrews T.D."/>
            <person name="Lloyd C."/>
            <person name="Ainscough R."/>
            <person name="Almeida J.P."/>
            <person name="Ambrose K.D."/>
            <person name="Anderson F."/>
            <person name="Andrew R.W."/>
            <person name="Ashwell R.I.S."/>
            <person name="Aubin K."/>
            <person name="Babbage A.K."/>
            <person name="Bagguley C.L."/>
            <person name="Bailey J."/>
            <person name="Beasley H."/>
            <person name="Bethel G."/>
            <person name="Bird C.P."/>
            <person name="Bray-Allen S."/>
            <person name="Brown J.Y."/>
            <person name="Brown A.J."/>
            <person name="Buckley D."/>
            <person name="Burton J."/>
            <person name="Bye J."/>
            <person name="Carder C."/>
            <person name="Chapman J.C."/>
            <person name="Clark S.Y."/>
            <person name="Clarke G."/>
            <person name="Clee C."/>
            <person name="Cobley V."/>
            <person name="Collier R.E."/>
            <person name="Corby N."/>
            <person name="Coville G.J."/>
            <person name="Davies J."/>
            <person name="Deadman R."/>
            <person name="Dunn M."/>
            <person name="Earthrowl M."/>
            <person name="Ellington A.G."/>
            <person name="Errington H."/>
            <person name="Frankish A."/>
            <person name="Frankland J."/>
            <person name="French L."/>
            <person name="Garner P."/>
            <person name="Garnett J."/>
            <person name="Gay L."/>
            <person name="Ghori M.R.J."/>
            <person name="Gibson R."/>
            <person name="Gilby L.M."/>
            <person name="Gillett W."/>
            <person name="Glithero R.J."/>
            <person name="Grafham D.V."/>
            <person name="Griffiths C."/>
            <person name="Griffiths-Jones S."/>
            <person name="Grocock R."/>
            <person name="Hammond S."/>
            <person name="Harrison E.S.I."/>
            <person name="Hart E."/>
            <person name="Haugen E."/>
            <person name="Heath P.D."/>
            <person name="Holmes S."/>
            <person name="Holt K."/>
            <person name="Howden P.J."/>
            <person name="Hunt A.R."/>
            <person name="Hunt S.E."/>
            <person name="Hunter G."/>
            <person name="Isherwood J."/>
            <person name="James R."/>
            <person name="Johnson C."/>
            <person name="Johnson D."/>
            <person name="Joy A."/>
            <person name="Kay M."/>
            <person name="Kershaw J.K."/>
            <person name="Kibukawa M."/>
            <person name="Kimberley A.M."/>
            <person name="King A."/>
            <person name="Knights A.J."/>
            <person name="Lad H."/>
            <person name="Laird G."/>
            <person name="Lawlor S."/>
            <person name="Leongamornlert D.A."/>
            <person name="Lloyd D.M."/>
            <person name="Loveland J."/>
            <person name="Lovell J."/>
            <person name="Lush M.J."/>
            <person name="Lyne R."/>
            <person name="Martin S."/>
            <person name="Mashreghi-Mohammadi M."/>
            <person name="Matthews L."/>
            <person name="Matthews N.S.W."/>
            <person name="McLaren S."/>
            <person name="Milne S."/>
            <person name="Mistry S."/>
            <person name="Moore M.J.F."/>
            <person name="Nickerson T."/>
            <person name="O'Dell C.N."/>
            <person name="Oliver K."/>
            <person name="Palmeiri A."/>
            <person name="Palmer S.A."/>
            <person name="Parker A."/>
            <person name="Patel D."/>
            <person name="Pearce A.V."/>
            <person name="Peck A.I."/>
            <person name="Pelan S."/>
            <person name="Phelps K."/>
            <person name="Phillimore B.J."/>
            <person name="Plumb R."/>
            <person name="Rajan J."/>
            <person name="Raymond C."/>
            <person name="Rouse G."/>
            <person name="Saenphimmachak C."/>
            <person name="Sehra H.K."/>
            <person name="Sheridan E."/>
            <person name="Shownkeen R."/>
            <person name="Sims S."/>
            <person name="Skuce C.D."/>
            <person name="Smith M."/>
            <person name="Steward C."/>
            <person name="Subramanian S."/>
            <person name="Sycamore N."/>
            <person name="Tracey A."/>
            <person name="Tromans A."/>
            <person name="Van Helmond Z."/>
            <person name="Wall M."/>
            <person name="Wallis J.M."/>
            <person name="White S."/>
            <person name="Whitehead S.L."/>
            <person name="Wilkinson J.E."/>
            <person name="Willey D.L."/>
            <person name="Williams H."/>
            <person name="Wilming L."/>
            <person name="Wray P.W."/>
            <person name="Wu Z."/>
            <person name="Coulson A."/>
            <person name="Vaudin M."/>
            <person name="Sulston J.E."/>
            <person name="Durbin R.M."/>
            <person name="Hubbard T."/>
            <person name="Wooster R."/>
            <person name="Dunham I."/>
            <person name="Carter N.P."/>
            <person name="McVean G."/>
            <person name="Ross M.T."/>
            <person name="Harrow J."/>
            <person name="Olson M.V."/>
            <person name="Beck S."/>
            <person name="Rogers J."/>
            <person name="Bentley D.R."/>
        </authorList>
    </citation>
    <scope>NUCLEOTIDE SEQUENCE [LARGE SCALE GENOMIC DNA]</scope>
</reference>
<name>KCNJ9_HUMAN</name>
<dbReference type="EMBL" id="U52152">
    <property type="protein sequence ID" value="AAB07043.1"/>
    <property type="molecule type" value="mRNA"/>
</dbReference>
<dbReference type="EMBL" id="AF193615">
    <property type="protein sequence ID" value="AAF89098.1"/>
    <property type="molecule type" value="Genomic_DNA"/>
</dbReference>
<dbReference type="EMBL" id="AL121987">
    <property type="status" value="NOT_ANNOTATED_CDS"/>
    <property type="molecule type" value="Genomic_DNA"/>
</dbReference>
<dbReference type="CCDS" id="CCDS1194.1"/>
<dbReference type="RefSeq" id="NP_004974.2">
    <property type="nucleotide sequence ID" value="NM_004983.2"/>
</dbReference>
<dbReference type="RefSeq" id="XP_047275806.1">
    <property type="nucleotide sequence ID" value="XM_047419850.1"/>
</dbReference>
<dbReference type="PDB" id="6X23">
    <property type="method" value="X-ray"/>
    <property type="resolution" value="2.15 A"/>
    <property type="chains" value="B=384-393"/>
</dbReference>
<dbReference type="PDBsum" id="6X23"/>
<dbReference type="SMR" id="Q92806"/>
<dbReference type="BioGRID" id="109967">
    <property type="interactions" value="5"/>
</dbReference>
<dbReference type="FunCoup" id="Q92806">
    <property type="interactions" value="568"/>
</dbReference>
<dbReference type="IntAct" id="Q92806">
    <property type="interactions" value="1"/>
</dbReference>
<dbReference type="STRING" id="9606.ENSP00000357067"/>
<dbReference type="ChEMBL" id="CHEMBL3038490"/>
<dbReference type="DrugBank" id="DB00898">
    <property type="generic name" value="Ethanol"/>
</dbReference>
<dbReference type="DrugBank" id="DB11633">
    <property type="generic name" value="Isavuconazole"/>
</dbReference>
<dbReference type="TCDB" id="1.A.2.1.19">
    <property type="family name" value="the inward rectifier k(+) channel (irk-c) family"/>
</dbReference>
<dbReference type="iPTMnet" id="Q92806"/>
<dbReference type="PhosphoSitePlus" id="Q92806"/>
<dbReference type="BioMuta" id="KCNJ9"/>
<dbReference type="DMDM" id="125987834"/>
<dbReference type="jPOST" id="Q92806"/>
<dbReference type="MassIVE" id="Q92806"/>
<dbReference type="PaxDb" id="9606-ENSP00000357067"/>
<dbReference type="PeptideAtlas" id="Q92806"/>
<dbReference type="ProteomicsDB" id="75491"/>
<dbReference type="ABCD" id="Q92806">
    <property type="antibodies" value="1 sequenced antibody"/>
</dbReference>
<dbReference type="Antibodypedia" id="34266">
    <property type="antibodies" value="131 antibodies from 29 providers"/>
</dbReference>
<dbReference type="DNASU" id="3765"/>
<dbReference type="Ensembl" id="ENST00000368088.4">
    <property type="protein sequence ID" value="ENSP00000357067.3"/>
    <property type="gene ID" value="ENSG00000162728.5"/>
</dbReference>
<dbReference type="GeneID" id="3765"/>
<dbReference type="KEGG" id="hsa:3765"/>
<dbReference type="MANE-Select" id="ENST00000368088.4">
    <property type="protein sequence ID" value="ENSP00000357067.3"/>
    <property type="RefSeq nucleotide sequence ID" value="NM_004983.3"/>
    <property type="RefSeq protein sequence ID" value="NP_004974.2"/>
</dbReference>
<dbReference type="UCSC" id="uc001fuy.2">
    <property type="organism name" value="human"/>
</dbReference>
<dbReference type="AGR" id="HGNC:6270"/>
<dbReference type="CTD" id="3765"/>
<dbReference type="DisGeNET" id="3765"/>
<dbReference type="GeneCards" id="KCNJ9"/>
<dbReference type="HGNC" id="HGNC:6270">
    <property type="gene designation" value="KCNJ9"/>
</dbReference>
<dbReference type="HPA" id="ENSG00000162728">
    <property type="expression patterns" value="Tissue enriched (brain)"/>
</dbReference>
<dbReference type="MIM" id="600932">
    <property type="type" value="gene"/>
</dbReference>
<dbReference type="neXtProt" id="NX_Q92806"/>
<dbReference type="OpenTargets" id="ENSG00000162728"/>
<dbReference type="PharmGKB" id="PA30051"/>
<dbReference type="VEuPathDB" id="HostDB:ENSG00000162728"/>
<dbReference type="eggNOG" id="KOG3827">
    <property type="taxonomic scope" value="Eukaryota"/>
</dbReference>
<dbReference type="GeneTree" id="ENSGT01080000257365"/>
<dbReference type="HOGENOM" id="CLU_022738_11_0_1"/>
<dbReference type="InParanoid" id="Q92806"/>
<dbReference type="OMA" id="RFSPMML"/>
<dbReference type="OrthoDB" id="273257at2759"/>
<dbReference type="PAN-GO" id="Q92806">
    <property type="GO annotations" value="4 GO annotations based on evolutionary models"/>
</dbReference>
<dbReference type="PhylomeDB" id="Q92806"/>
<dbReference type="TreeFam" id="TF313676"/>
<dbReference type="PathwayCommons" id="Q92806"/>
<dbReference type="Reactome" id="R-HSA-1296041">
    <property type="pathway name" value="Activation of G protein gated Potassium channels"/>
</dbReference>
<dbReference type="Reactome" id="R-HSA-997272">
    <property type="pathway name" value="Inhibition of voltage gated Ca2+ channels via Gbeta/gamma subunits"/>
</dbReference>
<dbReference type="SignaLink" id="Q92806"/>
<dbReference type="BioGRID-ORCS" id="3765">
    <property type="hits" value="90 hits in 1137 CRISPR screens"/>
</dbReference>
<dbReference type="GeneWiki" id="KCNJ9"/>
<dbReference type="GenomeRNAi" id="3765"/>
<dbReference type="Pharos" id="Q92806">
    <property type="development level" value="Tbio"/>
</dbReference>
<dbReference type="PRO" id="PR:Q92806"/>
<dbReference type="Proteomes" id="UP000005640">
    <property type="component" value="Chromosome 1"/>
</dbReference>
<dbReference type="RNAct" id="Q92806">
    <property type="molecule type" value="protein"/>
</dbReference>
<dbReference type="Bgee" id="ENSG00000162728">
    <property type="expression patterns" value="Expressed in middle temporal gyrus and 88 other cell types or tissues"/>
</dbReference>
<dbReference type="GO" id="GO:1902937">
    <property type="term" value="C:inward rectifier potassium channel complex"/>
    <property type="evidence" value="ECO:0007669"/>
    <property type="project" value="Ensembl"/>
</dbReference>
<dbReference type="GO" id="GO:0098688">
    <property type="term" value="C:parallel fiber to Purkinje cell synapse"/>
    <property type="evidence" value="ECO:0007669"/>
    <property type="project" value="Ensembl"/>
</dbReference>
<dbReference type="GO" id="GO:0005886">
    <property type="term" value="C:plasma membrane"/>
    <property type="evidence" value="ECO:0000318"/>
    <property type="project" value="GO_Central"/>
</dbReference>
<dbReference type="GO" id="GO:0042734">
    <property type="term" value="C:presynaptic membrane"/>
    <property type="evidence" value="ECO:0007669"/>
    <property type="project" value="Ensembl"/>
</dbReference>
<dbReference type="GO" id="GO:0015467">
    <property type="term" value="F:G-protein activated inward rectifier potassium channel activity"/>
    <property type="evidence" value="ECO:0007669"/>
    <property type="project" value="Ensembl"/>
</dbReference>
<dbReference type="GO" id="GO:0005242">
    <property type="term" value="F:inward rectifier potassium channel activity"/>
    <property type="evidence" value="ECO:0000318"/>
    <property type="project" value="GO_Central"/>
</dbReference>
<dbReference type="GO" id="GO:1990573">
    <property type="term" value="P:potassium ion import across plasma membrane"/>
    <property type="evidence" value="ECO:0000318"/>
    <property type="project" value="GO_Central"/>
</dbReference>
<dbReference type="GO" id="GO:0034765">
    <property type="term" value="P:regulation of monoatomic ion transmembrane transport"/>
    <property type="evidence" value="ECO:0000318"/>
    <property type="project" value="GO_Central"/>
</dbReference>
<dbReference type="GO" id="GO:0099505">
    <property type="term" value="P:regulation of presynaptic membrane potential"/>
    <property type="evidence" value="ECO:0007669"/>
    <property type="project" value="Ensembl"/>
</dbReference>
<dbReference type="FunFam" id="1.10.287.70:FF:000019">
    <property type="entry name" value="G protein-activated inward rectifier potassium channel 1"/>
    <property type="match status" value="1"/>
</dbReference>
<dbReference type="FunFam" id="2.60.40.1400:FF:000001">
    <property type="entry name" value="G protein-activated inward rectifier potassium channel 2"/>
    <property type="match status" value="1"/>
</dbReference>
<dbReference type="Gene3D" id="1.10.287.70">
    <property type="match status" value="1"/>
</dbReference>
<dbReference type="Gene3D" id="2.60.40.1400">
    <property type="entry name" value="G protein-activated inward rectifier potassium channel 1"/>
    <property type="match status" value="1"/>
</dbReference>
<dbReference type="InterPro" id="IPR014756">
    <property type="entry name" value="Ig_E-set"/>
</dbReference>
<dbReference type="InterPro" id="IPR041647">
    <property type="entry name" value="IRK_C"/>
</dbReference>
<dbReference type="InterPro" id="IPR016449">
    <property type="entry name" value="K_chnl_inward-rec_Kir"/>
</dbReference>
<dbReference type="InterPro" id="IPR003276">
    <property type="entry name" value="K_chnl_inward-rec_Kir3.3"/>
</dbReference>
<dbReference type="InterPro" id="IPR013518">
    <property type="entry name" value="K_chnl_inward-rec_Kir_cyto"/>
</dbReference>
<dbReference type="InterPro" id="IPR040445">
    <property type="entry name" value="Kir_TM"/>
</dbReference>
<dbReference type="PANTHER" id="PTHR11767:SF17">
    <property type="entry name" value="G PROTEIN-ACTIVATED INWARD RECTIFIER POTASSIUM CHANNEL 3"/>
    <property type="match status" value="1"/>
</dbReference>
<dbReference type="PANTHER" id="PTHR11767">
    <property type="entry name" value="INWARD RECTIFIER POTASSIUM CHANNEL"/>
    <property type="match status" value="1"/>
</dbReference>
<dbReference type="Pfam" id="PF01007">
    <property type="entry name" value="IRK"/>
    <property type="match status" value="1"/>
</dbReference>
<dbReference type="Pfam" id="PF17655">
    <property type="entry name" value="IRK_C"/>
    <property type="match status" value="1"/>
</dbReference>
<dbReference type="PIRSF" id="PIRSF005465">
    <property type="entry name" value="GIRK_kir"/>
    <property type="match status" value="1"/>
</dbReference>
<dbReference type="PRINTS" id="PR01329">
    <property type="entry name" value="KIR33CHANNEL"/>
</dbReference>
<dbReference type="PRINTS" id="PR01320">
    <property type="entry name" value="KIRCHANNEL"/>
</dbReference>
<dbReference type="SUPFAM" id="SSF81296">
    <property type="entry name" value="E set domains"/>
    <property type="match status" value="1"/>
</dbReference>
<dbReference type="SUPFAM" id="SSF81324">
    <property type="entry name" value="Voltage-gated potassium channels"/>
    <property type="match status" value="1"/>
</dbReference>
<protein>
    <recommendedName>
        <fullName>G protein-activated inward rectifier potassium channel 3</fullName>
        <shortName>GIRK-3</shortName>
    </recommendedName>
    <alternativeName>
        <fullName>Inward rectifier K(+) channel Kir3.3</fullName>
    </alternativeName>
    <alternativeName>
        <fullName>Potassium channel, inwardly rectifying subfamily J member 9</fullName>
    </alternativeName>
</protein>
<accession>Q92806</accession>
<accession>Q5JW75</accession>